<gene>
    <name evidence="2" type="primary">mutM</name>
    <name evidence="2" type="synonym">fpg</name>
    <name type="ordered locus">SAG1489</name>
</gene>
<evidence type="ECO:0000250" key="1"/>
<evidence type="ECO:0000255" key="2">
    <source>
        <dbReference type="HAMAP-Rule" id="MF_00103"/>
    </source>
</evidence>
<name>FPG_STRA5</name>
<protein>
    <recommendedName>
        <fullName evidence="2">Formamidopyrimidine-DNA glycosylase</fullName>
        <shortName evidence="2">Fapy-DNA glycosylase</shortName>
        <ecNumber evidence="2">3.2.2.23</ecNumber>
    </recommendedName>
    <alternativeName>
        <fullName evidence="2">DNA-(apurinic or apyrimidinic site) lyase MutM</fullName>
        <shortName evidence="2">AP lyase MutM</shortName>
        <ecNumber evidence="2">4.2.99.18</ecNumber>
    </alternativeName>
</protein>
<comment type="function">
    <text evidence="2">Involved in base excision repair of DNA damaged by oxidation or by mutagenic agents. Acts as a DNA glycosylase that recognizes and removes damaged bases. Has a preference for oxidized purines, such as 7,8-dihydro-8-oxoguanine (8-oxoG). Has AP (apurinic/apyrimidinic) lyase activity and introduces nicks in the DNA strand. Cleaves the DNA backbone by beta-delta elimination to generate a single-strand break at the site of the removed base with both 3'- and 5'-phosphates.</text>
</comment>
<comment type="catalytic activity">
    <reaction evidence="2">
        <text>Hydrolysis of DNA containing ring-opened 7-methylguanine residues, releasing 2,6-diamino-4-hydroxy-5-(N-methyl)formamidopyrimidine.</text>
        <dbReference type="EC" id="3.2.2.23"/>
    </reaction>
</comment>
<comment type="catalytic activity">
    <reaction evidence="2">
        <text>2'-deoxyribonucleotide-(2'-deoxyribose 5'-phosphate)-2'-deoxyribonucleotide-DNA = a 3'-end 2'-deoxyribonucleotide-(2,3-dehydro-2,3-deoxyribose 5'-phosphate)-DNA + a 5'-end 5'-phospho-2'-deoxyribonucleoside-DNA + H(+)</text>
        <dbReference type="Rhea" id="RHEA:66592"/>
        <dbReference type="Rhea" id="RHEA-COMP:13180"/>
        <dbReference type="Rhea" id="RHEA-COMP:16897"/>
        <dbReference type="Rhea" id="RHEA-COMP:17067"/>
        <dbReference type="ChEBI" id="CHEBI:15378"/>
        <dbReference type="ChEBI" id="CHEBI:136412"/>
        <dbReference type="ChEBI" id="CHEBI:157695"/>
        <dbReference type="ChEBI" id="CHEBI:167181"/>
        <dbReference type="EC" id="4.2.99.18"/>
    </reaction>
</comment>
<comment type="cofactor">
    <cofactor evidence="2">
        <name>Zn(2+)</name>
        <dbReference type="ChEBI" id="CHEBI:29105"/>
    </cofactor>
    <text evidence="2">Binds 1 zinc ion per subunit.</text>
</comment>
<comment type="subunit">
    <text evidence="2">Monomer.</text>
</comment>
<comment type="similarity">
    <text evidence="2">Belongs to the FPG family.</text>
</comment>
<keyword id="KW-0227">DNA damage</keyword>
<keyword id="KW-0234">DNA repair</keyword>
<keyword id="KW-0238">DNA-binding</keyword>
<keyword id="KW-0326">Glycosidase</keyword>
<keyword id="KW-0378">Hydrolase</keyword>
<keyword id="KW-0456">Lyase</keyword>
<keyword id="KW-0479">Metal-binding</keyword>
<keyword id="KW-0511">Multifunctional enzyme</keyword>
<keyword id="KW-1185">Reference proteome</keyword>
<keyword id="KW-0862">Zinc</keyword>
<keyword id="KW-0863">Zinc-finger</keyword>
<dbReference type="EC" id="3.2.2.23" evidence="2"/>
<dbReference type="EC" id="4.2.99.18" evidence="2"/>
<dbReference type="EMBL" id="AE009948">
    <property type="protein sequence ID" value="AAN00356.1"/>
    <property type="molecule type" value="Genomic_DNA"/>
</dbReference>
<dbReference type="RefSeq" id="NP_688483.1">
    <property type="nucleotide sequence ID" value="NC_004116.1"/>
</dbReference>
<dbReference type="RefSeq" id="WP_001114602.1">
    <property type="nucleotide sequence ID" value="NC_004116.1"/>
</dbReference>
<dbReference type="SMR" id="P64153"/>
<dbReference type="STRING" id="208435.SAG1489"/>
<dbReference type="GeneID" id="66886349"/>
<dbReference type="KEGG" id="sag:SAG1489"/>
<dbReference type="PATRIC" id="fig|208435.3.peg.1499"/>
<dbReference type="HOGENOM" id="CLU_038423_1_2_9"/>
<dbReference type="OrthoDB" id="9800855at2"/>
<dbReference type="Proteomes" id="UP000000821">
    <property type="component" value="Chromosome"/>
</dbReference>
<dbReference type="GO" id="GO:0034039">
    <property type="term" value="F:8-oxo-7,8-dihydroguanine DNA N-glycosylase activity"/>
    <property type="evidence" value="ECO:0007669"/>
    <property type="project" value="TreeGrafter"/>
</dbReference>
<dbReference type="GO" id="GO:0140078">
    <property type="term" value="F:class I DNA-(apurinic or apyrimidinic site) endonuclease activity"/>
    <property type="evidence" value="ECO:0007669"/>
    <property type="project" value="UniProtKB-EC"/>
</dbReference>
<dbReference type="GO" id="GO:0003684">
    <property type="term" value="F:damaged DNA binding"/>
    <property type="evidence" value="ECO:0007669"/>
    <property type="project" value="InterPro"/>
</dbReference>
<dbReference type="GO" id="GO:0008270">
    <property type="term" value="F:zinc ion binding"/>
    <property type="evidence" value="ECO:0007669"/>
    <property type="project" value="UniProtKB-UniRule"/>
</dbReference>
<dbReference type="GO" id="GO:0006284">
    <property type="term" value="P:base-excision repair"/>
    <property type="evidence" value="ECO:0007669"/>
    <property type="project" value="InterPro"/>
</dbReference>
<dbReference type="CDD" id="cd08966">
    <property type="entry name" value="EcFpg-like_N"/>
    <property type="match status" value="1"/>
</dbReference>
<dbReference type="FunFam" id="1.10.8.50:FF:000003">
    <property type="entry name" value="Formamidopyrimidine-DNA glycosylase"/>
    <property type="match status" value="1"/>
</dbReference>
<dbReference type="FunFam" id="3.20.190.10:FF:000001">
    <property type="entry name" value="Formamidopyrimidine-DNA glycosylase"/>
    <property type="match status" value="1"/>
</dbReference>
<dbReference type="Gene3D" id="1.10.8.50">
    <property type="match status" value="1"/>
</dbReference>
<dbReference type="Gene3D" id="3.20.190.10">
    <property type="entry name" value="MutM-like, N-terminal"/>
    <property type="match status" value="1"/>
</dbReference>
<dbReference type="HAMAP" id="MF_00103">
    <property type="entry name" value="Fapy_DNA_glycosyl"/>
    <property type="match status" value="1"/>
</dbReference>
<dbReference type="InterPro" id="IPR015886">
    <property type="entry name" value="DNA_glyclase/AP_lyase_DNA-bd"/>
</dbReference>
<dbReference type="InterPro" id="IPR015887">
    <property type="entry name" value="DNA_glyclase_Znf_dom_DNA_BS"/>
</dbReference>
<dbReference type="InterPro" id="IPR020629">
    <property type="entry name" value="Formamido-pyr_DNA_Glyclase"/>
</dbReference>
<dbReference type="InterPro" id="IPR012319">
    <property type="entry name" value="FPG_cat"/>
</dbReference>
<dbReference type="InterPro" id="IPR035937">
    <property type="entry name" value="MutM-like_N-ter"/>
</dbReference>
<dbReference type="InterPro" id="IPR010979">
    <property type="entry name" value="Ribosomal_uS13-like_H2TH"/>
</dbReference>
<dbReference type="InterPro" id="IPR000214">
    <property type="entry name" value="Znf_DNA_glyclase/AP_lyase"/>
</dbReference>
<dbReference type="InterPro" id="IPR010663">
    <property type="entry name" value="Znf_FPG/IleRS"/>
</dbReference>
<dbReference type="NCBIfam" id="TIGR00577">
    <property type="entry name" value="fpg"/>
    <property type="match status" value="1"/>
</dbReference>
<dbReference type="NCBIfam" id="NF002211">
    <property type="entry name" value="PRK01103.1"/>
    <property type="match status" value="1"/>
</dbReference>
<dbReference type="PANTHER" id="PTHR22993">
    <property type="entry name" value="FORMAMIDOPYRIMIDINE-DNA GLYCOSYLASE"/>
    <property type="match status" value="1"/>
</dbReference>
<dbReference type="PANTHER" id="PTHR22993:SF9">
    <property type="entry name" value="FORMAMIDOPYRIMIDINE-DNA GLYCOSYLASE"/>
    <property type="match status" value="1"/>
</dbReference>
<dbReference type="Pfam" id="PF01149">
    <property type="entry name" value="Fapy_DNA_glyco"/>
    <property type="match status" value="1"/>
</dbReference>
<dbReference type="Pfam" id="PF06831">
    <property type="entry name" value="H2TH"/>
    <property type="match status" value="1"/>
</dbReference>
<dbReference type="Pfam" id="PF06827">
    <property type="entry name" value="zf-FPG_IleRS"/>
    <property type="match status" value="1"/>
</dbReference>
<dbReference type="SMART" id="SM00898">
    <property type="entry name" value="Fapy_DNA_glyco"/>
    <property type="match status" value="1"/>
</dbReference>
<dbReference type="SMART" id="SM01232">
    <property type="entry name" value="H2TH"/>
    <property type="match status" value="1"/>
</dbReference>
<dbReference type="SUPFAM" id="SSF57716">
    <property type="entry name" value="Glucocorticoid receptor-like (DNA-binding domain)"/>
    <property type="match status" value="1"/>
</dbReference>
<dbReference type="SUPFAM" id="SSF81624">
    <property type="entry name" value="N-terminal domain of MutM-like DNA repair proteins"/>
    <property type="match status" value="1"/>
</dbReference>
<dbReference type="SUPFAM" id="SSF46946">
    <property type="entry name" value="S13-like H2TH domain"/>
    <property type="match status" value="1"/>
</dbReference>
<dbReference type="PROSITE" id="PS51068">
    <property type="entry name" value="FPG_CAT"/>
    <property type="match status" value="1"/>
</dbReference>
<dbReference type="PROSITE" id="PS01242">
    <property type="entry name" value="ZF_FPG_1"/>
    <property type="match status" value="1"/>
</dbReference>
<dbReference type="PROSITE" id="PS51066">
    <property type="entry name" value="ZF_FPG_2"/>
    <property type="match status" value="1"/>
</dbReference>
<proteinExistence type="inferred from homology"/>
<reference key="1">
    <citation type="journal article" date="2002" name="Proc. Natl. Acad. Sci. U.S.A.">
        <title>Complete genome sequence and comparative genomic analysis of an emerging human pathogen, serotype V Streptococcus agalactiae.</title>
        <authorList>
            <person name="Tettelin H."/>
            <person name="Masignani V."/>
            <person name="Cieslewicz M.J."/>
            <person name="Eisen J.A."/>
            <person name="Peterson S.N."/>
            <person name="Wessels M.R."/>
            <person name="Paulsen I.T."/>
            <person name="Nelson K.E."/>
            <person name="Margarit I."/>
            <person name="Read T.D."/>
            <person name="Madoff L.C."/>
            <person name="Wolf A.M."/>
            <person name="Beanan M.J."/>
            <person name="Brinkac L.M."/>
            <person name="Daugherty S.C."/>
            <person name="DeBoy R.T."/>
            <person name="Durkin A.S."/>
            <person name="Kolonay J.F."/>
            <person name="Madupu R."/>
            <person name="Lewis M.R."/>
            <person name="Radune D."/>
            <person name="Fedorova N.B."/>
            <person name="Scanlan D."/>
            <person name="Khouri H.M."/>
            <person name="Mulligan S."/>
            <person name="Carty H.A."/>
            <person name="Cline R.T."/>
            <person name="Van Aken S.E."/>
            <person name="Gill J."/>
            <person name="Scarselli M."/>
            <person name="Mora M."/>
            <person name="Iacobini E.T."/>
            <person name="Brettoni C."/>
            <person name="Galli G."/>
            <person name="Mariani M."/>
            <person name="Vegni F."/>
            <person name="Maione D."/>
            <person name="Rinaudo D."/>
            <person name="Rappuoli R."/>
            <person name="Telford J.L."/>
            <person name="Kasper D.L."/>
            <person name="Grandi G."/>
            <person name="Fraser C.M."/>
        </authorList>
    </citation>
    <scope>NUCLEOTIDE SEQUENCE [LARGE SCALE GENOMIC DNA]</scope>
    <source>
        <strain>ATCC BAA-611 / 2603 V/R</strain>
    </source>
</reference>
<accession>P64153</accession>
<accession>Q8DYJ1</accession>
<accession>Q8E448</accession>
<sequence>MPELPEVETVRKGLERLVVNQEIASITIKVPKMVKTDLNDFMISLPGKTIQQVLRRGKYLLFDFGEMVMVSHLRMEGKYLLFPNKVPDNKHFHLYFKLTNGSTLVYQDVRKFGTFELVRKSSLKDYFTQKKLGPEPTADTFQFEPFSKGLANSKKPIKPLLLDQRLVAGLGNIYVDEVLWAAKIHPQRLANQLTESETSLLHKEIIRILTLGIEKGGSTIRTYKNALGEDGTMQKYLQVYGKTGQPCPRCGCLIKKIKVGGRGTHYCPRCQCL</sequence>
<organism>
    <name type="scientific">Streptococcus agalactiae serotype V (strain ATCC BAA-611 / 2603 V/R)</name>
    <dbReference type="NCBI Taxonomy" id="208435"/>
    <lineage>
        <taxon>Bacteria</taxon>
        <taxon>Bacillati</taxon>
        <taxon>Bacillota</taxon>
        <taxon>Bacilli</taxon>
        <taxon>Lactobacillales</taxon>
        <taxon>Streptococcaceae</taxon>
        <taxon>Streptococcus</taxon>
    </lineage>
</organism>
<feature type="initiator methionine" description="Removed" evidence="1">
    <location>
        <position position="1"/>
    </location>
</feature>
<feature type="chain" id="PRO_0000170865" description="Formamidopyrimidine-DNA glycosylase">
    <location>
        <begin position="2"/>
        <end position="273"/>
    </location>
</feature>
<feature type="zinc finger region" description="FPG-type" evidence="2">
    <location>
        <begin position="238"/>
        <end position="272"/>
    </location>
</feature>
<feature type="active site" description="Schiff-base intermediate with DNA" evidence="2">
    <location>
        <position position="2"/>
    </location>
</feature>
<feature type="active site" description="Proton donor" evidence="2">
    <location>
        <position position="3"/>
    </location>
</feature>
<feature type="active site" description="Proton donor; for beta-elimination activity" evidence="2">
    <location>
        <position position="58"/>
    </location>
</feature>
<feature type="active site" description="Proton donor; for delta-elimination activity" evidence="2">
    <location>
        <position position="262"/>
    </location>
</feature>
<feature type="binding site" evidence="2">
    <location>
        <position position="91"/>
    </location>
    <ligand>
        <name>DNA</name>
        <dbReference type="ChEBI" id="CHEBI:16991"/>
    </ligand>
</feature>
<feature type="binding site" evidence="2">
    <location>
        <position position="110"/>
    </location>
    <ligand>
        <name>DNA</name>
        <dbReference type="ChEBI" id="CHEBI:16991"/>
    </ligand>
</feature>